<sequence>MFSKKSYDGPPAGYGPPTGYGAPTADYGYGSPPPGSYYVDDAPQLFYKWTSPPGAVRGLQAGVLVLCIAIFACVASTLAWDYGYGLGGAYGTGLGGFYGSNYYGSGLSYSYGYGGYYGGVNQRTANGFMIAMAVLCFLAQLGLLVAALSKSGATRSRRFYLAVLVLSAVLAFVMLIASIVYIMGVNPQAQMSSGYYYSPLLAMCSQAYGSTYLNQYIYHYCTVDPQEAVAAVCGFLIVILLCLICFFAQKTRSKIWRYGKANIYWDRAPVVQEGPDVEEWVKNVADGASVQDETATLAYSEKPTSPVAAPPYSYVPPPSAGYYPSGTYSSRGDQPDRALSASPVHGEEEEEKGKDQPSRPPARRGRRRRRNPELDESQYETDYTTAVESSDERDQEQWASLYPPITSDGARQRYKQEFDTDLKRYKQLCAEMDSINDRLNQLSRRLDSITEDSPQYQDVAEEYNQLKDLKRSPDYQSKKQESKVLRNKLFHIKRMVSAYDKVRG</sequence>
<accession>Q91049</accession>
<proteinExistence type="evidence at protein level"/>
<gene>
    <name type="primary">OCLN</name>
</gene>
<organism>
    <name type="scientific">Gallus gallus</name>
    <name type="common">Chicken</name>
    <dbReference type="NCBI Taxonomy" id="9031"/>
    <lineage>
        <taxon>Eukaryota</taxon>
        <taxon>Metazoa</taxon>
        <taxon>Chordata</taxon>
        <taxon>Craniata</taxon>
        <taxon>Vertebrata</taxon>
        <taxon>Euteleostomi</taxon>
        <taxon>Archelosauria</taxon>
        <taxon>Archosauria</taxon>
        <taxon>Dinosauria</taxon>
        <taxon>Saurischia</taxon>
        <taxon>Theropoda</taxon>
        <taxon>Coelurosauria</taxon>
        <taxon>Aves</taxon>
        <taxon>Neognathae</taxon>
        <taxon>Galloanserae</taxon>
        <taxon>Galliformes</taxon>
        <taxon>Phasianidae</taxon>
        <taxon>Phasianinae</taxon>
        <taxon>Gallus</taxon>
    </lineage>
</organism>
<protein>
    <recommendedName>
        <fullName>Occludin</fullName>
    </recommendedName>
</protein>
<keyword id="KW-0965">Cell junction</keyword>
<keyword id="KW-1003">Cell membrane</keyword>
<keyword id="KW-0175">Coiled coil</keyword>
<keyword id="KW-1015">Disulfide bond</keyword>
<keyword id="KW-0472">Membrane</keyword>
<keyword id="KW-0597">Phosphoprotein</keyword>
<keyword id="KW-1185">Reference proteome</keyword>
<keyword id="KW-0796">Tight junction</keyword>
<keyword id="KW-0812">Transmembrane</keyword>
<keyword id="KW-1133">Transmembrane helix</keyword>
<dbReference type="EMBL" id="D21837">
    <property type="protein sequence ID" value="BAA04865.1"/>
    <property type="molecule type" value="mRNA"/>
</dbReference>
<dbReference type="PIR" id="A49467">
    <property type="entry name" value="A49467"/>
</dbReference>
<dbReference type="RefSeq" id="NP_990459.1">
    <property type="nucleotide sequence ID" value="NM_205128.1"/>
</dbReference>
<dbReference type="RefSeq" id="XP_046760495.1">
    <property type="nucleotide sequence ID" value="XM_046904539.1"/>
</dbReference>
<dbReference type="RefSeq" id="XP_046760496.1">
    <property type="nucleotide sequence ID" value="XM_046904540.1"/>
</dbReference>
<dbReference type="SMR" id="Q91049"/>
<dbReference type="FunCoup" id="Q91049">
    <property type="interactions" value="231"/>
</dbReference>
<dbReference type="IntAct" id="Q91049">
    <property type="interactions" value="1"/>
</dbReference>
<dbReference type="STRING" id="9031.ENSGALP00000045888"/>
<dbReference type="TCDB" id="9.B.41.1.3">
    <property type="family name" value="the occludin (occludin) family"/>
</dbReference>
<dbReference type="iPTMnet" id="Q91049"/>
<dbReference type="PaxDb" id="9031-ENSGALP00000041881"/>
<dbReference type="Ensembl" id="ENSGALT00010069214.1">
    <property type="protein sequence ID" value="ENSGALP00010042656.1"/>
    <property type="gene ID" value="ENSGALG00010028579.1"/>
</dbReference>
<dbReference type="GeneID" id="396026"/>
<dbReference type="KEGG" id="gga:396026"/>
<dbReference type="CTD" id="100506658"/>
<dbReference type="VEuPathDB" id="HostDB:geneid_396026"/>
<dbReference type="eggNOG" id="ENOG502QS9F">
    <property type="taxonomic scope" value="Eukaryota"/>
</dbReference>
<dbReference type="GeneTree" id="ENSGT00940000165052"/>
<dbReference type="InParanoid" id="Q91049"/>
<dbReference type="OMA" id="AFFAHKT"/>
<dbReference type="OrthoDB" id="8867927at2759"/>
<dbReference type="PhylomeDB" id="Q91049"/>
<dbReference type="PRO" id="PR:Q91049"/>
<dbReference type="Proteomes" id="UP000000539">
    <property type="component" value="Chromosome 28"/>
</dbReference>
<dbReference type="GO" id="GO:0005923">
    <property type="term" value="C:bicellular tight junction"/>
    <property type="evidence" value="ECO:0007669"/>
    <property type="project" value="UniProtKB-SubCell"/>
</dbReference>
<dbReference type="GO" id="GO:0030054">
    <property type="term" value="C:cell junction"/>
    <property type="evidence" value="ECO:0000314"/>
    <property type="project" value="UniProtKB"/>
</dbReference>
<dbReference type="GO" id="GO:0016020">
    <property type="term" value="C:membrane"/>
    <property type="evidence" value="ECO:0000314"/>
    <property type="project" value="UniProtKB"/>
</dbReference>
<dbReference type="GO" id="GO:0005886">
    <property type="term" value="C:plasma membrane"/>
    <property type="evidence" value="ECO:0007669"/>
    <property type="project" value="UniProtKB-SubCell"/>
</dbReference>
<dbReference type="GO" id="GO:0008023">
    <property type="term" value="C:transcription elongation factor complex"/>
    <property type="evidence" value="ECO:0000318"/>
    <property type="project" value="GO_Central"/>
</dbReference>
<dbReference type="GO" id="GO:0000987">
    <property type="term" value="F:cis-regulatory region sequence-specific DNA binding"/>
    <property type="evidence" value="ECO:0000318"/>
    <property type="project" value="GO_Central"/>
</dbReference>
<dbReference type="GO" id="GO:0070830">
    <property type="term" value="P:bicellular tight junction assembly"/>
    <property type="evidence" value="ECO:0007669"/>
    <property type="project" value="InterPro"/>
</dbReference>
<dbReference type="GO" id="GO:0032968">
    <property type="term" value="P:positive regulation of transcription elongation by RNA polymerase II"/>
    <property type="evidence" value="ECO:0000318"/>
    <property type="project" value="GO_Central"/>
</dbReference>
<dbReference type="GO" id="GO:0042795">
    <property type="term" value="P:snRNA transcription by RNA polymerase II"/>
    <property type="evidence" value="ECO:0000318"/>
    <property type="project" value="GO_Central"/>
</dbReference>
<dbReference type="Gene3D" id="6.10.140.340">
    <property type="match status" value="1"/>
</dbReference>
<dbReference type="InterPro" id="IPR031176">
    <property type="entry name" value="ELL/occludin"/>
</dbReference>
<dbReference type="InterPro" id="IPR008253">
    <property type="entry name" value="Marvel"/>
</dbReference>
<dbReference type="InterPro" id="IPR002958">
    <property type="entry name" value="Occludin"/>
</dbReference>
<dbReference type="InterPro" id="IPR010844">
    <property type="entry name" value="Occludin_ELL"/>
</dbReference>
<dbReference type="PANTHER" id="PTHR23288:SF6">
    <property type="entry name" value="OCCLUDIN"/>
    <property type="match status" value="1"/>
</dbReference>
<dbReference type="PANTHER" id="PTHR23288">
    <property type="entry name" value="OCCLUDIN AND RNA POLYMERASE II ELONGATION FACTOR ELL"/>
    <property type="match status" value="1"/>
</dbReference>
<dbReference type="Pfam" id="PF01284">
    <property type="entry name" value="MARVEL"/>
    <property type="match status" value="1"/>
</dbReference>
<dbReference type="Pfam" id="PF07303">
    <property type="entry name" value="Occludin_ELL"/>
    <property type="match status" value="1"/>
</dbReference>
<dbReference type="PIRSF" id="PIRSF005993">
    <property type="entry name" value="Occludin"/>
    <property type="match status" value="1"/>
</dbReference>
<dbReference type="PRINTS" id="PR01258">
    <property type="entry name" value="OCCLUDIN"/>
</dbReference>
<dbReference type="SUPFAM" id="SSF144292">
    <property type="entry name" value="occludin/ELL-like"/>
    <property type="match status" value="1"/>
</dbReference>
<dbReference type="PROSITE" id="PS51225">
    <property type="entry name" value="MARVEL"/>
    <property type="match status" value="1"/>
</dbReference>
<dbReference type="PROSITE" id="PS51980">
    <property type="entry name" value="OCEL"/>
    <property type="match status" value="1"/>
</dbReference>
<reference key="1">
    <citation type="journal article" date="1993" name="J. Cell Biol.">
        <title>Occludin: a novel integral membrane protein localizing at tight junctions.</title>
        <authorList>
            <person name="Furuse M."/>
            <person name="Hirase T."/>
            <person name="Itoh M."/>
            <person name="Nagafuchi A."/>
            <person name="Yonemura S."/>
            <person name="Tsukita S."/>
            <person name="Tsukita S."/>
        </authorList>
    </citation>
    <scope>NUCLEOTIDE SEQUENCE [MRNA]</scope>
    <source>
        <tissue>Embryonic brain</tissue>
    </source>
</reference>
<reference key="2">
    <citation type="journal article" date="2009" name="J. Biol. Chem.">
        <title>Phosphorylation of Tyr-398 and Tyr-402 in occludin prevents its interaction with ZO-1 and destabilizes its assembly at the tight junctions.</title>
        <authorList>
            <person name="Elias B.C."/>
            <person name="Suzuki T."/>
            <person name="Seth A."/>
            <person name="Giorgianni F."/>
            <person name="Kale G."/>
            <person name="Shen L."/>
            <person name="Turner J.R."/>
            <person name="Naren A."/>
            <person name="Desiderio D.M."/>
            <person name="Rao R."/>
        </authorList>
    </citation>
    <scope>PHOSPHORYLATION AT TYR-379 AND TYR-383 BY SRC</scope>
    <scope>IDENTIFICATION BY MASS SPECTROMETRY</scope>
    <scope>MUTAGENESIS OF TYR-379 AND TYR-383</scope>
    <scope>INTERACTION WITH TJP1 AND TJP3</scope>
</reference>
<comment type="function">
    <text>May play a role in the formation and regulation of the tight junction (TJ) paracellular permeability barrier. Interacts with ZO-1.</text>
</comment>
<comment type="subunit">
    <text evidence="8">Interacts with TJP1 and TJP3.</text>
</comment>
<comment type="interaction">
    <interactant intactId="EBI-79619">
        <id>Q91049</id>
    </interactant>
    <interactant intactId="EBI-79525">
        <id>Q9PTD7</id>
        <label>cgn</label>
    </interactant>
    <organismsDiffer>true</organismsDiffer>
    <experiments>2</experiments>
</comment>
<comment type="subcellular location">
    <subcellularLocation>
        <location evidence="2">Cell membrane</location>
        <topology evidence="3">Multi-pass membrane protein</topology>
    </subcellularLocation>
    <subcellularLocation>
        <location evidence="2">Cell junction</location>
        <location evidence="2">Tight junction</location>
    </subcellularLocation>
</comment>
<comment type="tissue specificity">
    <text>Localized at tight junctions of both epithelial and endothelial cells. Highly expressed in lung and liver. Expressed at a lower level in brain.</text>
</comment>
<comment type="domain">
    <text>The C-terminal is cytoplasmic and is important for interaction with ZO-1. Necessary for the tight junction localization. Involved in the regulation of the permeability barrier function of the tight junction. The second extracellular domain may also be implicated in the permeability barrier function of the tight junction.</text>
</comment>
<comment type="PTM">
    <text evidence="1">Phosphorylated.</text>
</comment>
<comment type="similarity">
    <text evidence="9">Belongs to the ELL/occludin family.</text>
</comment>
<name>OCLN_CHICK</name>
<feature type="chain" id="PRO_0000146742" description="Occludin">
    <location>
        <begin position="1"/>
        <end position="504"/>
    </location>
</feature>
<feature type="topological domain" description="Cytoplasmic" evidence="3">
    <location>
        <begin position="1"/>
        <end position="57"/>
    </location>
</feature>
<feature type="transmembrane region" description="Helical" evidence="3">
    <location>
        <begin position="58"/>
        <end position="80"/>
    </location>
</feature>
<feature type="topological domain" description="Extracellular" evidence="3">
    <location>
        <begin position="81"/>
        <end position="123"/>
    </location>
</feature>
<feature type="transmembrane region" description="Helical" evidence="3">
    <location>
        <begin position="124"/>
        <end position="148"/>
    </location>
</feature>
<feature type="topological domain" description="Cytoplasmic" evidence="3">
    <location>
        <begin position="149"/>
        <end position="158"/>
    </location>
</feature>
<feature type="transmembrane region" description="Helical" evidence="3">
    <location>
        <begin position="159"/>
        <end position="183"/>
    </location>
</feature>
<feature type="topological domain" description="Extracellular" evidence="3">
    <location>
        <begin position="184"/>
        <end position="227"/>
    </location>
</feature>
<feature type="transmembrane region" description="Helical" evidence="3">
    <location>
        <begin position="228"/>
        <end position="249"/>
    </location>
</feature>
<feature type="topological domain" description="Cytoplasmic" evidence="3">
    <location>
        <begin position="250"/>
        <end position="504"/>
    </location>
</feature>
<feature type="domain" description="MARVEL" evidence="5">
    <location>
        <begin position="51"/>
        <end position="253"/>
    </location>
</feature>
<feature type="domain" description="OCEL" evidence="6">
    <location>
        <begin position="396"/>
        <end position="504"/>
    </location>
</feature>
<feature type="region of interest" description="Disordered" evidence="7">
    <location>
        <begin position="324"/>
        <end position="396"/>
    </location>
</feature>
<feature type="region of interest" description="Interaction with TJP1" evidence="8">
    <location>
        <begin position="379"/>
        <end position="385"/>
    </location>
</feature>
<feature type="coiled-coil region" evidence="3">
    <location>
        <begin position="412"/>
        <end position="471"/>
    </location>
</feature>
<feature type="compositionally biased region" description="Basic residues" evidence="7">
    <location>
        <begin position="361"/>
        <end position="370"/>
    </location>
</feature>
<feature type="modified residue" description="Phosphotyrosine" evidence="8">
    <location>
        <position position="379"/>
    </location>
</feature>
<feature type="modified residue" description="Phosphotyrosine" evidence="8">
    <location>
        <position position="383"/>
    </location>
</feature>
<feature type="disulfide bond" evidence="4">
    <location>
        <begin position="204"/>
        <end position="221"/>
    </location>
</feature>
<feature type="mutagenesis site" description="Lower binding to TJP1, higher binding to TJP3 and decrease in phosphorylation. Lower binding to TJP1 and TJP3, loss of phosphorylation and loss of regulation of TJP1 binding; when associated with D-383." evidence="8">
    <original>Y</original>
    <variation>D</variation>
    <location>
        <position position="379"/>
    </location>
</feature>
<feature type="mutagenesis site" description="Decrease in phosphorylation and decrease in regulation of TJP1 binding. Loss of phosphorylation and loss of regulation of TJP1 binding; when associated with F-383." evidence="8">
    <original>Y</original>
    <variation>F</variation>
    <location>
        <position position="379"/>
    </location>
</feature>
<feature type="mutagenesis site" description="Lower binding to TJP1 and TJP3, decrease in phosphorylation and loss of regulation of TJP1 and TJP3 binding. Lower binding to TJP1 and TJP3, loss of phosphorylation and loss of regulation of TJP1 binding; when associated with D-379." evidence="8">
    <original>Y</original>
    <variation>D</variation>
    <location>
        <position position="383"/>
    </location>
</feature>
<feature type="mutagenesis site" description="Decrease in phosphorylation and loss of regulation of TJP1 binding. Loss of phosphorylation and loss of regulation of TJP1 binding; when associated with F-379." evidence="8">
    <original>Y</original>
    <variation>F</variation>
    <location>
        <position position="383"/>
    </location>
</feature>
<evidence type="ECO:0000250" key="1"/>
<evidence type="ECO:0000250" key="2">
    <source>
        <dbReference type="UniProtKB" id="Q16625"/>
    </source>
</evidence>
<evidence type="ECO:0000255" key="3"/>
<evidence type="ECO:0000255" key="4">
    <source>
        <dbReference type="PROSITE-ProRule" id="PRU00114"/>
    </source>
</evidence>
<evidence type="ECO:0000255" key="5">
    <source>
        <dbReference type="PROSITE-ProRule" id="PRU00581"/>
    </source>
</evidence>
<evidence type="ECO:0000255" key="6">
    <source>
        <dbReference type="PROSITE-ProRule" id="PRU01324"/>
    </source>
</evidence>
<evidence type="ECO:0000256" key="7">
    <source>
        <dbReference type="SAM" id="MobiDB-lite"/>
    </source>
</evidence>
<evidence type="ECO:0000269" key="8">
    <source>
    </source>
</evidence>
<evidence type="ECO:0000305" key="9"/>